<feature type="chain" id="PRO_0000293794" description="Small ribosomal subunit protein uS3">
    <location>
        <begin position="1"/>
        <end position="350"/>
    </location>
</feature>
<feature type="domain" description="KH type-2" evidence="1">
    <location>
        <begin position="38"/>
        <end position="106"/>
    </location>
</feature>
<feature type="region of interest" description="Disordered" evidence="2">
    <location>
        <begin position="211"/>
        <end position="350"/>
    </location>
</feature>
<feature type="compositionally biased region" description="Basic residues" evidence="2">
    <location>
        <begin position="222"/>
        <end position="232"/>
    </location>
</feature>
<feature type="compositionally biased region" description="Low complexity" evidence="2">
    <location>
        <begin position="261"/>
        <end position="350"/>
    </location>
</feature>
<comment type="function">
    <text evidence="1">Binds the lower part of the 30S subunit head. Binds mRNA in the 70S ribosome, positioning it for translation.</text>
</comment>
<comment type="subunit">
    <text evidence="1">Part of the 30S ribosomal subunit. Forms a tight complex with proteins S10 and S14.</text>
</comment>
<comment type="similarity">
    <text evidence="1">Belongs to the universal ribosomal protein uS3 family.</text>
</comment>
<organism>
    <name type="scientific">Frankia alni (strain DSM 45986 / CECT 9034 / ACN14a)</name>
    <dbReference type="NCBI Taxonomy" id="326424"/>
    <lineage>
        <taxon>Bacteria</taxon>
        <taxon>Bacillati</taxon>
        <taxon>Actinomycetota</taxon>
        <taxon>Actinomycetes</taxon>
        <taxon>Frankiales</taxon>
        <taxon>Frankiaceae</taxon>
        <taxon>Frankia</taxon>
    </lineage>
</organism>
<proteinExistence type="inferred from homology"/>
<reference key="1">
    <citation type="journal article" date="2007" name="Genome Res.">
        <title>Genome characteristics of facultatively symbiotic Frankia sp. strains reflect host range and host plant biogeography.</title>
        <authorList>
            <person name="Normand P."/>
            <person name="Lapierre P."/>
            <person name="Tisa L.S."/>
            <person name="Gogarten J.P."/>
            <person name="Alloisio N."/>
            <person name="Bagnarol E."/>
            <person name="Bassi C.A."/>
            <person name="Berry A.M."/>
            <person name="Bickhart D.M."/>
            <person name="Choisne N."/>
            <person name="Couloux A."/>
            <person name="Cournoyer B."/>
            <person name="Cruveiller S."/>
            <person name="Daubin V."/>
            <person name="Demange N."/>
            <person name="Francino M.P."/>
            <person name="Goltsman E."/>
            <person name="Huang Y."/>
            <person name="Kopp O.R."/>
            <person name="Labarre L."/>
            <person name="Lapidus A."/>
            <person name="Lavire C."/>
            <person name="Marechal J."/>
            <person name="Martinez M."/>
            <person name="Mastronunzio J.E."/>
            <person name="Mullin B.C."/>
            <person name="Niemann J."/>
            <person name="Pujic P."/>
            <person name="Rawnsley T."/>
            <person name="Rouy Z."/>
            <person name="Schenowitz C."/>
            <person name="Sellstedt A."/>
            <person name="Tavares F."/>
            <person name="Tomkins J.P."/>
            <person name="Vallenet D."/>
            <person name="Valverde C."/>
            <person name="Wall L.G."/>
            <person name="Wang Y."/>
            <person name="Medigue C."/>
            <person name="Benson D.R."/>
        </authorList>
    </citation>
    <scope>NUCLEOTIDE SEQUENCE [LARGE SCALE GENOMIC DNA]</scope>
    <source>
        <strain>DSM 45986 / CECT 9034 / ACN14a</strain>
    </source>
</reference>
<dbReference type="EMBL" id="CT573213">
    <property type="protein sequence ID" value="CAJ59752.1"/>
    <property type="molecule type" value="Genomic_DNA"/>
</dbReference>
<dbReference type="RefSeq" id="WP_011602303.1">
    <property type="nucleotide sequence ID" value="NC_008278.1"/>
</dbReference>
<dbReference type="SMR" id="Q0RRR5"/>
<dbReference type="STRING" id="326424.FRAAL1087"/>
<dbReference type="KEGG" id="fal:FRAAL1087"/>
<dbReference type="eggNOG" id="COG0092">
    <property type="taxonomic scope" value="Bacteria"/>
</dbReference>
<dbReference type="HOGENOM" id="CLU_058591_0_0_11"/>
<dbReference type="OrthoDB" id="9806396at2"/>
<dbReference type="Proteomes" id="UP000000657">
    <property type="component" value="Chromosome"/>
</dbReference>
<dbReference type="GO" id="GO:0022627">
    <property type="term" value="C:cytosolic small ribosomal subunit"/>
    <property type="evidence" value="ECO:0007669"/>
    <property type="project" value="TreeGrafter"/>
</dbReference>
<dbReference type="GO" id="GO:0003729">
    <property type="term" value="F:mRNA binding"/>
    <property type="evidence" value="ECO:0007669"/>
    <property type="project" value="UniProtKB-UniRule"/>
</dbReference>
<dbReference type="GO" id="GO:0019843">
    <property type="term" value="F:rRNA binding"/>
    <property type="evidence" value="ECO:0007669"/>
    <property type="project" value="UniProtKB-UniRule"/>
</dbReference>
<dbReference type="GO" id="GO:0003735">
    <property type="term" value="F:structural constituent of ribosome"/>
    <property type="evidence" value="ECO:0007669"/>
    <property type="project" value="InterPro"/>
</dbReference>
<dbReference type="GO" id="GO:0006412">
    <property type="term" value="P:translation"/>
    <property type="evidence" value="ECO:0007669"/>
    <property type="project" value="UniProtKB-UniRule"/>
</dbReference>
<dbReference type="CDD" id="cd02412">
    <property type="entry name" value="KH-II_30S_S3"/>
    <property type="match status" value="1"/>
</dbReference>
<dbReference type="FunFam" id="3.30.1140.32:FF:000002">
    <property type="entry name" value="30S ribosomal protein S3"/>
    <property type="match status" value="1"/>
</dbReference>
<dbReference type="FunFam" id="3.30.300.20:FF:000001">
    <property type="entry name" value="30S ribosomal protein S3"/>
    <property type="match status" value="1"/>
</dbReference>
<dbReference type="Gene3D" id="3.30.300.20">
    <property type="match status" value="1"/>
</dbReference>
<dbReference type="Gene3D" id="3.30.1140.32">
    <property type="entry name" value="Ribosomal protein S3, C-terminal domain"/>
    <property type="match status" value="1"/>
</dbReference>
<dbReference type="HAMAP" id="MF_01309_B">
    <property type="entry name" value="Ribosomal_uS3_B"/>
    <property type="match status" value="1"/>
</dbReference>
<dbReference type="InterPro" id="IPR004087">
    <property type="entry name" value="KH_dom"/>
</dbReference>
<dbReference type="InterPro" id="IPR015946">
    <property type="entry name" value="KH_dom-like_a/b"/>
</dbReference>
<dbReference type="InterPro" id="IPR004044">
    <property type="entry name" value="KH_dom_type_2"/>
</dbReference>
<dbReference type="InterPro" id="IPR009019">
    <property type="entry name" value="KH_sf_prok-type"/>
</dbReference>
<dbReference type="InterPro" id="IPR036419">
    <property type="entry name" value="Ribosomal_S3_C_sf"/>
</dbReference>
<dbReference type="InterPro" id="IPR005704">
    <property type="entry name" value="Ribosomal_uS3_bac-typ"/>
</dbReference>
<dbReference type="InterPro" id="IPR001351">
    <property type="entry name" value="Ribosomal_uS3_C"/>
</dbReference>
<dbReference type="InterPro" id="IPR018280">
    <property type="entry name" value="Ribosomal_uS3_CS"/>
</dbReference>
<dbReference type="NCBIfam" id="TIGR01009">
    <property type="entry name" value="rpsC_bact"/>
    <property type="match status" value="1"/>
</dbReference>
<dbReference type="PANTHER" id="PTHR11760">
    <property type="entry name" value="30S/40S RIBOSOMAL PROTEIN S3"/>
    <property type="match status" value="1"/>
</dbReference>
<dbReference type="PANTHER" id="PTHR11760:SF19">
    <property type="entry name" value="SMALL RIBOSOMAL SUBUNIT PROTEIN US3C"/>
    <property type="match status" value="1"/>
</dbReference>
<dbReference type="Pfam" id="PF07650">
    <property type="entry name" value="KH_2"/>
    <property type="match status" value="1"/>
</dbReference>
<dbReference type="Pfam" id="PF00189">
    <property type="entry name" value="Ribosomal_S3_C"/>
    <property type="match status" value="1"/>
</dbReference>
<dbReference type="SMART" id="SM00322">
    <property type="entry name" value="KH"/>
    <property type="match status" value="1"/>
</dbReference>
<dbReference type="SUPFAM" id="SSF54814">
    <property type="entry name" value="Prokaryotic type KH domain (KH-domain type II)"/>
    <property type="match status" value="1"/>
</dbReference>
<dbReference type="SUPFAM" id="SSF54821">
    <property type="entry name" value="Ribosomal protein S3 C-terminal domain"/>
    <property type="match status" value="1"/>
</dbReference>
<dbReference type="PROSITE" id="PS50823">
    <property type="entry name" value="KH_TYPE_2"/>
    <property type="match status" value="1"/>
</dbReference>
<dbReference type="PROSITE" id="PS00548">
    <property type="entry name" value="RIBOSOMAL_S3"/>
    <property type="match status" value="1"/>
</dbReference>
<evidence type="ECO:0000255" key="1">
    <source>
        <dbReference type="HAMAP-Rule" id="MF_01309"/>
    </source>
</evidence>
<evidence type="ECO:0000256" key="2">
    <source>
        <dbReference type="SAM" id="MobiDB-lite"/>
    </source>
</evidence>
<evidence type="ECO:0000305" key="3"/>
<accession>Q0RRR5</accession>
<sequence length="350" mass="37442">MGQKVNPHGFRLGITSEFTSRWYADKQYKAYVGEDVKIRKMMSRGMERAGISRVDIERTQGRLRVDIHTARPGIVIGRRGAEADRIRGDLEKLTGKQVQLNILEVKNPEVDAQLVAQGVAEQLSSRVSFRRAMRKAMQTAMKGGAKGIRVQCSGRLGGAEMSRSEFYREGRVPLHTLRADIDYGFYEARTNFGRIGVKVWIYKGDIVQSRAEREAQEALQRQTRRDRPRRGPRSGSSGTTQGGTDAGRAAARSERRGRGGNAPAAETAASEAGATESTAPESTAPESTAPESTAPESTAPESTAPETTAPEAASSPAPAAESTAPATAASESAATPAAAATPGTPEKAEE</sequence>
<protein>
    <recommendedName>
        <fullName evidence="1">Small ribosomal subunit protein uS3</fullName>
    </recommendedName>
    <alternativeName>
        <fullName evidence="3">30S ribosomal protein S3</fullName>
    </alternativeName>
</protein>
<keyword id="KW-1185">Reference proteome</keyword>
<keyword id="KW-0687">Ribonucleoprotein</keyword>
<keyword id="KW-0689">Ribosomal protein</keyword>
<keyword id="KW-0694">RNA-binding</keyword>
<keyword id="KW-0699">rRNA-binding</keyword>
<gene>
    <name evidence="1" type="primary">rpsC</name>
    <name type="ordered locus">FRAAL1087</name>
</gene>
<name>RS3_FRAAA</name>